<keyword id="KW-1003">Cell membrane</keyword>
<keyword id="KW-0169">Cobalamin biosynthesis</keyword>
<keyword id="KW-0460">Magnesium</keyword>
<keyword id="KW-0472">Membrane</keyword>
<keyword id="KW-0808">Transferase</keyword>
<keyword id="KW-0812">Transmembrane</keyword>
<keyword id="KW-1133">Transmembrane helix</keyword>
<organism>
    <name type="scientific">Mycobacterium sp. (strain MCS)</name>
    <dbReference type="NCBI Taxonomy" id="164756"/>
    <lineage>
        <taxon>Bacteria</taxon>
        <taxon>Bacillati</taxon>
        <taxon>Actinomycetota</taxon>
        <taxon>Actinomycetes</taxon>
        <taxon>Mycobacteriales</taxon>
        <taxon>Mycobacteriaceae</taxon>
        <taxon>Mycobacterium</taxon>
    </lineage>
</organism>
<feature type="chain" id="PRO_1000045782" description="Adenosylcobinamide-GDP ribazoletransferase">
    <location>
        <begin position="1"/>
        <end position="248"/>
    </location>
</feature>
<feature type="transmembrane region" description="Helical" evidence="1">
    <location>
        <begin position="1"/>
        <end position="21"/>
    </location>
</feature>
<feature type="transmembrane region" description="Helical" evidence="1">
    <location>
        <begin position="35"/>
        <end position="55"/>
    </location>
</feature>
<feature type="transmembrane region" description="Helical" evidence="1">
    <location>
        <begin position="59"/>
        <end position="79"/>
    </location>
</feature>
<feature type="transmembrane region" description="Helical" evidence="1">
    <location>
        <begin position="101"/>
        <end position="121"/>
    </location>
</feature>
<feature type="transmembrane region" description="Helical" evidence="1">
    <location>
        <begin position="123"/>
        <end position="143"/>
    </location>
</feature>
<feature type="transmembrane region" description="Helical" evidence="1">
    <location>
        <begin position="171"/>
        <end position="191"/>
    </location>
</feature>
<feature type="transmembrane region" description="Helical" evidence="1">
    <location>
        <begin position="197"/>
        <end position="217"/>
    </location>
</feature>
<feature type="transmembrane region" description="Helical" evidence="1">
    <location>
        <begin position="227"/>
        <end position="247"/>
    </location>
</feature>
<reference key="1">
    <citation type="submission" date="2006-06" db="EMBL/GenBank/DDBJ databases">
        <title>Complete sequence of chromosome of Mycobacterium sp. MCS.</title>
        <authorList>
            <consortium name="US DOE Joint Genome Institute"/>
            <person name="Copeland A."/>
            <person name="Lucas S."/>
            <person name="Lapidus A."/>
            <person name="Barry K."/>
            <person name="Detter J.C."/>
            <person name="Glavina del Rio T."/>
            <person name="Hammon N."/>
            <person name="Israni S."/>
            <person name="Dalin E."/>
            <person name="Tice H."/>
            <person name="Pitluck S."/>
            <person name="Martinez M."/>
            <person name="Schmutz J."/>
            <person name="Larimer F."/>
            <person name="Land M."/>
            <person name="Hauser L."/>
            <person name="Kyrpides N."/>
            <person name="Kim E."/>
            <person name="Miller C.D."/>
            <person name="Hughes J.E."/>
            <person name="Anderson A.J."/>
            <person name="Sims R.C."/>
            <person name="Richardson P."/>
        </authorList>
    </citation>
    <scope>NUCLEOTIDE SEQUENCE [LARGE SCALE GENOMIC DNA]</scope>
    <source>
        <strain>MCS</strain>
    </source>
</reference>
<comment type="function">
    <text evidence="1">Joins adenosylcobinamide-GDP and alpha-ribazole to generate adenosylcobalamin (Ado-cobalamin). Also synthesizes adenosylcobalamin 5'-phosphate from adenosylcobinamide-GDP and alpha-ribazole 5'-phosphate.</text>
</comment>
<comment type="catalytic activity">
    <reaction evidence="1">
        <text>alpha-ribazole + adenosylcob(III)inamide-GDP = adenosylcob(III)alamin + GMP + H(+)</text>
        <dbReference type="Rhea" id="RHEA:16049"/>
        <dbReference type="ChEBI" id="CHEBI:10329"/>
        <dbReference type="ChEBI" id="CHEBI:15378"/>
        <dbReference type="ChEBI" id="CHEBI:18408"/>
        <dbReference type="ChEBI" id="CHEBI:58115"/>
        <dbReference type="ChEBI" id="CHEBI:60487"/>
        <dbReference type="EC" id="2.7.8.26"/>
    </reaction>
</comment>
<comment type="catalytic activity">
    <reaction evidence="1">
        <text>alpha-ribazole 5'-phosphate + adenosylcob(III)inamide-GDP = adenosylcob(III)alamin 5'-phosphate + GMP + H(+)</text>
        <dbReference type="Rhea" id="RHEA:23560"/>
        <dbReference type="ChEBI" id="CHEBI:15378"/>
        <dbReference type="ChEBI" id="CHEBI:57918"/>
        <dbReference type="ChEBI" id="CHEBI:58115"/>
        <dbReference type="ChEBI" id="CHEBI:60487"/>
        <dbReference type="ChEBI" id="CHEBI:60493"/>
        <dbReference type="EC" id="2.7.8.26"/>
    </reaction>
</comment>
<comment type="cofactor">
    <cofactor evidence="1">
        <name>Mg(2+)</name>
        <dbReference type="ChEBI" id="CHEBI:18420"/>
    </cofactor>
</comment>
<comment type="pathway">
    <text evidence="1">Cofactor biosynthesis; adenosylcobalamin biosynthesis; adenosylcobalamin from cob(II)yrinate a,c-diamide: step 7/7.</text>
</comment>
<comment type="subcellular location">
    <subcellularLocation>
        <location evidence="1">Cell membrane</location>
        <topology evidence="1">Multi-pass membrane protein</topology>
    </subcellularLocation>
</comment>
<comment type="similarity">
    <text evidence="1">Belongs to the CobS family.</text>
</comment>
<evidence type="ECO:0000255" key="1">
    <source>
        <dbReference type="HAMAP-Rule" id="MF_00719"/>
    </source>
</evidence>
<name>COBS_MYCSS</name>
<gene>
    <name evidence="1" type="primary">cobS</name>
    <name type="ordered locus">Mmcs_3306</name>
</gene>
<accession>Q1B6S1</accession>
<protein>
    <recommendedName>
        <fullName evidence="1">Adenosylcobinamide-GDP ribazoletransferase</fullName>
        <ecNumber evidence="1">2.7.8.26</ecNumber>
    </recommendedName>
    <alternativeName>
        <fullName evidence="1">Cobalamin synthase</fullName>
    </alternativeName>
    <alternativeName>
        <fullName evidence="1">Cobalamin-5'-phosphate synthase</fullName>
    </alternativeName>
</protein>
<sequence>MIGSLAGAFAFGTVLPVPAGSTATLGRGVMTALPGVGIVLGAVAAAVLWAGSWAFGPHSALAGLLAVAVLLLATRGMHIDGLSDTVDGLGCYGAPERALRVMRDGSAGAFGAASIVVAVGAQTLAFSMLPGGWSGAVGVVVAVTAGRVAALVACRRGIPAAEGSALGGRVAGTQPAAVVLVWLAAVAALAIPATERIWQGPLTVVVAVGMTALLVRHCVRRFGGITGDVLGAAIEVTTTVVAVGLVIR</sequence>
<proteinExistence type="inferred from homology"/>
<dbReference type="EC" id="2.7.8.26" evidence="1"/>
<dbReference type="EMBL" id="CP000384">
    <property type="protein sequence ID" value="ABG09413.1"/>
    <property type="molecule type" value="Genomic_DNA"/>
</dbReference>
<dbReference type="KEGG" id="mmc:Mmcs_3306"/>
<dbReference type="HOGENOM" id="CLU_057426_0_2_11"/>
<dbReference type="BioCyc" id="MSP164756:G1G6O-3372-MONOMER"/>
<dbReference type="UniPathway" id="UPA00148">
    <property type="reaction ID" value="UER00238"/>
</dbReference>
<dbReference type="GO" id="GO:0005886">
    <property type="term" value="C:plasma membrane"/>
    <property type="evidence" value="ECO:0007669"/>
    <property type="project" value="UniProtKB-SubCell"/>
</dbReference>
<dbReference type="GO" id="GO:0051073">
    <property type="term" value="F:adenosylcobinamide-GDP ribazoletransferase activity"/>
    <property type="evidence" value="ECO:0007669"/>
    <property type="project" value="UniProtKB-UniRule"/>
</dbReference>
<dbReference type="GO" id="GO:0008818">
    <property type="term" value="F:cobalamin 5'-phosphate synthase activity"/>
    <property type="evidence" value="ECO:0007669"/>
    <property type="project" value="UniProtKB-UniRule"/>
</dbReference>
<dbReference type="GO" id="GO:0009236">
    <property type="term" value="P:cobalamin biosynthetic process"/>
    <property type="evidence" value="ECO:0007669"/>
    <property type="project" value="UniProtKB-UniRule"/>
</dbReference>
<dbReference type="HAMAP" id="MF_00719">
    <property type="entry name" value="CobS"/>
    <property type="match status" value="1"/>
</dbReference>
<dbReference type="InterPro" id="IPR003805">
    <property type="entry name" value="CobS"/>
</dbReference>
<dbReference type="NCBIfam" id="NF001279">
    <property type="entry name" value="PRK00235.2-1"/>
    <property type="match status" value="1"/>
</dbReference>
<dbReference type="PANTHER" id="PTHR34148">
    <property type="entry name" value="ADENOSYLCOBINAMIDE-GDP RIBAZOLETRANSFERASE"/>
    <property type="match status" value="1"/>
</dbReference>
<dbReference type="PANTHER" id="PTHR34148:SF1">
    <property type="entry name" value="ADENOSYLCOBINAMIDE-GDP RIBAZOLETRANSFERASE"/>
    <property type="match status" value="1"/>
</dbReference>
<dbReference type="Pfam" id="PF02654">
    <property type="entry name" value="CobS"/>
    <property type="match status" value="1"/>
</dbReference>